<gene>
    <name evidence="1" type="primary">acdS</name>
    <name type="ordered locus">BURPS1106A_A1795</name>
</gene>
<proteinExistence type="inferred from homology"/>
<protein>
    <recommendedName>
        <fullName evidence="1">1-aminocyclopropane-1-carboxylate deaminase</fullName>
        <shortName evidence="1">ACC deaminase</shortName>
        <shortName evidence="1">ACCD</shortName>
        <ecNumber evidence="1">3.5.99.7</ecNumber>
    </recommendedName>
</protein>
<name>1A1D_BURP0</name>
<organism>
    <name type="scientific">Burkholderia pseudomallei (strain 1106a)</name>
    <dbReference type="NCBI Taxonomy" id="357348"/>
    <lineage>
        <taxon>Bacteria</taxon>
        <taxon>Pseudomonadati</taxon>
        <taxon>Pseudomonadota</taxon>
        <taxon>Betaproteobacteria</taxon>
        <taxon>Burkholderiales</taxon>
        <taxon>Burkholderiaceae</taxon>
        <taxon>Burkholderia</taxon>
        <taxon>pseudomallei group</taxon>
    </lineage>
</organism>
<dbReference type="EC" id="3.5.99.7" evidence="1"/>
<dbReference type="EMBL" id="CP000573">
    <property type="protein sequence ID" value="ABN95734.1"/>
    <property type="molecule type" value="Genomic_DNA"/>
</dbReference>
<dbReference type="RefSeq" id="WP_004184549.1">
    <property type="nucleotide sequence ID" value="NC_009078.1"/>
</dbReference>
<dbReference type="SMR" id="A3P669"/>
<dbReference type="KEGG" id="bpl:BURPS1106A_A1795"/>
<dbReference type="HOGENOM" id="CLU_048897_2_1_4"/>
<dbReference type="Proteomes" id="UP000006738">
    <property type="component" value="Chromosome II"/>
</dbReference>
<dbReference type="GO" id="GO:0008660">
    <property type="term" value="F:1-aminocyclopropane-1-carboxylate deaminase activity"/>
    <property type="evidence" value="ECO:0007669"/>
    <property type="project" value="UniProtKB-UniRule"/>
</dbReference>
<dbReference type="GO" id="GO:0019148">
    <property type="term" value="F:D-cysteine desulfhydrase activity"/>
    <property type="evidence" value="ECO:0007669"/>
    <property type="project" value="TreeGrafter"/>
</dbReference>
<dbReference type="GO" id="GO:0030170">
    <property type="term" value="F:pyridoxal phosphate binding"/>
    <property type="evidence" value="ECO:0007669"/>
    <property type="project" value="InterPro"/>
</dbReference>
<dbReference type="GO" id="GO:0018871">
    <property type="term" value="P:1-aminocyclopropane-1-carboxylate metabolic process"/>
    <property type="evidence" value="ECO:0007669"/>
    <property type="project" value="UniProtKB-UniRule"/>
</dbReference>
<dbReference type="GO" id="GO:0009310">
    <property type="term" value="P:amine catabolic process"/>
    <property type="evidence" value="ECO:0007669"/>
    <property type="project" value="InterPro"/>
</dbReference>
<dbReference type="CDD" id="cd06449">
    <property type="entry name" value="ACCD"/>
    <property type="match status" value="1"/>
</dbReference>
<dbReference type="FunFam" id="3.40.50.1100:FF:000053">
    <property type="entry name" value="1-aminocyclopropane-1-carboxylate deaminase"/>
    <property type="match status" value="1"/>
</dbReference>
<dbReference type="Gene3D" id="3.40.50.1100">
    <property type="match status" value="2"/>
</dbReference>
<dbReference type="HAMAP" id="MF_00807">
    <property type="entry name" value="ACC_deaminase"/>
    <property type="match status" value="1"/>
</dbReference>
<dbReference type="InterPro" id="IPR027278">
    <property type="entry name" value="ACCD_DCysDesulf"/>
</dbReference>
<dbReference type="InterPro" id="IPR005965">
    <property type="entry name" value="ACP_carboxylate_deaminase"/>
</dbReference>
<dbReference type="InterPro" id="IPR020601">
    <property type="entry name" value="ACP_carboxylate_deaminase_bac"/>
</dbReference>
<dbReference type="InterPro" id="IPR001926">
    <property type="entry name" value="TrpB-like_PALP"/>
</dbReference>
<dbReference type="InterPro" id="IPR036052">
    <property type="entry name" value="TrpB-like_PALP_sf"/>
</dbReference>
<dbReference type="NCBIfam" id="TIGR01274">
    <property type="entry name" value="ACC_deam"/>
    <property type="match status" value="1"/>
</dbReference>
<dbReference type="PANTHER" id="PTHR43780">
    <property type="entry name" value="1-AMINOCYCLOPROPANE-1-CARBOXYLATE DEAMINASE-RELATED"/>
    <property type="match status" value="1"/>
</dbReference>
<dbReference type="PANTHER" id="PTHR43780:SF2">
    <property type="entry name" value="1-AMINOCYCLOPROPANE-1-CARBOXYLATE DEAMINASE-RELATED"/>
    <property type="match status" value="1"/>
</dbReference>
<dbReference type="Pfam" id="PF00291">
    <property type="entry name" value="PALP"/>
    <property type="match status" value="1"/>
</dbReference>
<dbReference type="PIRSF" id="PIRSF006278">
    <property type="entry name" value="ACCD_DCysDesulf"/>
    <property type="match status" value="1"/>
</dbReference>
<dbReference type="SUPFAM" id="SSF53686">
    <property type="entry name" value="Tryptophan synthase beta subunit-like PLP-dependent enzymes"/>
    <property type="match status" value="1"/>
</dbReference>
<evidence type="ECO:0000255" key="1">
    <source>
        <dbReference type="HAMAP-Rule" id="MF_00807"/>
    </source>
</evidence>
<reference key="1">
    <citation type="journal article" date="2010" name="Genome Biol. Evol.">
        <title>Continuing evolution of Burkholderia mallei through genome reduction and large-scale rearrangements.</title>
        <authorList>
            <person name="Losada L."/>
            <person name="Ronning C.M."/>
            <person name="DeShazer D."/>
            <person name="Woods D."/>
            <person name="Fedorova N."/>
            <person name="Kim H.S."/>
            <person name="Shabalina S.A."/>
            <person name="Pearson T.R."/>
            <person name="Brinkac L."/>
            <person name="Tan P."/>
            <person name="Nandi T."/>
            <person name="Crabtree J."/>
            <person name="Badger J."/>
            <person name="Beckstrom-Sternberg S."/>
            <person name="Saqib M."/>
            <person name="Schutzer S.E."/>
            <person name="Keim P."/>
            <person name="Nierman W.C."/>
        </authorList>
    </citation>
    <scope>NUCLEOTIDE SEQUENCE [LARGE SCALE GENOMIC DNA]</scope>
    <source>
        <strain>1106a</strain>
    </source>
</reference>
<keyword id="KW-0378">Hydrolase</keyword>
<keyword id="KW-0663">Pyridoxal phosphate</keyword>
<comment type="function">
    <text evidence="1">Catalyzes a cyclopropane ring-opening reaction, the irreversible conversion of 1-aminocyclopropane-1-carboxylate (ACC) to ammonia and alpha-ketobutyrate. Allows growth on ACC as a nitrogen source.</text>
</comment>
<comment type="catalytic activity">
    <reaction evidence="1">
        <text>1-aminocyclopropane-1-carboxylate + H2O = 2-oxobutanoate + NH4(+)</text>
        <dbReference type="Rhea" id="RHEA:16933"/>
        <dbReference type="ChEBI" id="CHEBI:15377"/>
        <dbReference type="ChEBI" id="CHEBI:16763"/>
        <dbReference type="ChEBI" id="CHEBI:28938"/>
        <dbReference type="ChEBI" id="CHEBI:58360"/>
        <dbReference type="EC" id="3.5.99.7"/>
    </reaction>
</comment>
<comment type="cofactor">
    <cofactor evidence="1">
        <name>pyridoxal 5'-phosphate</name>
        <dbReference type="ChEBI" id="CHEBI:597326"/>
    </cofactor>
</comment>
<comment type="subunit">
    <text evidence="1">Homotrimer.</text>
</comment>
<comment type="similarity">
    <text evidence="1">Belongs to the ACC deaminase/D-cysteine desulfhydrase family.</text>
</comment>
<accession>A3P669</accession>
<sequence length="338" mass="36481">MNLQKFSRYPLTFGPTPIQPLKRLSAHLGGKVELYAKRDDCNSGLAFGGNKTRKLEYLIPDALAQGCDTLVSIGGIQSNQTRQVAAVAAHLGMKCVLVQENWVNYHDAVYDRVGNIQMSRMMGADVRLVPDGFDIGFRKSWEDALADVRARGGKPYAIPAGCSDHPLGGLGFVGFAEEVRAQEAELGFQFDYVVVCSVTGSTQAGMVVGFAADGRADRVIGVDASAKPAQTREQILRIAKHTADRVELGRDITSADVVLDERFGGPEYGLPNEGTLEAIRLCAKLEGVLTDPVYEGKSMHGMIEKVRLGEFPAGSKVLYAHLGGVPALNAYSFLFRDG</sequence>
<feature type="chain" id="PRO_0000304373" description="1-aminocyclopropane-1-carboxylate deaminase">
    <location>
        <begin position="1"/>
        <end position="338"/>
    </location>
</feature>
<feature type="active site" description="Nucleophile" evidence="1">
    <location>
        <position position="78"/>
    </location>
</feature>
<feature type="modified residue" description="N6-(pyridoxal phosphate)lysine" evidence="1">
    <location>
        <position position="51"/>
    </location>
</feature>